<gene>
    <name type="primary">cfxQ</name>
</gene>
<sequence>MKVNLQTEFKQTQIQQVLDDLDRELIGLQAVKTRIREIAALLLVDRLRQKLGLSSSNPGLHMSFTGSPGTGKTTVATKMADILYRLGYIKKGHLITVTRDDLVGQYIGHTAPKTKQVLKNAMGGVLFIDEAYYLYRPDNERDYGAEAIEILLQVMENQRDDLVIIFAGYKEKMDRFYASNPGLSSRVANHVNFPDYTPEELLMIGKIMLQEQQYQFTPEAEEVFLQYIQRRMQQPHFANARSVRNALDRARLRQANRIFATPGQNLTKYDLVTIQAEDILKCRLFQ</sequence>
<comment type="function">
    <text evidence="1">Necessary for the expression of RuBisCO.</text>
</comment>
<comment type="subcellular location">
    <subcellularLocation>
        <location>Plastid</location>
        <location>Chloroplast</location>
    </subcellularLocation>
</comment>
<comment type="similarity">
    <text evidence="3">Belongs to the CbxX/CfxQ family.</text>
</comment>
<proteinExistence type="inferred from homology"/>
<accession>O22034</accession>
<feature type="chain" id="PRO_0000063037" description="Protein CfxQ homolog">
    <location>
        <begin position="1"/>
        <end position="286"/>
    </location>
</feature>
<feature type="binding site" evidence="2">
    <location>
        <begin position="66"/>
        <end position="73"/>
    </location>
    <ligand>
        <name>ATP</name>
        <dbReference type="ChEBI" id="CHEBI:30616"/>
    </ligand>
</feature>
<organism>
    <name type="scientific">Cyanidium caldarium</name>
    <name type="common">Red alga</name>
    <dbReference type="NCBI Taxonomy" id="2771"/>
    <lineage>
        <taxon>Eukaryota</taxon>
        <taxon>Rhodophyta</taxon>
        <taxon>Bangiophyceae</taxon>
        <taxon>Cyanidiales</taxon>
        <taxon>Cyanidiaceae</taxon>
        <taxon>Cyanidium</taxon>
    </lineage>
</organism>
<reference key="1">
    <citation type="journal article" date="1997" name="J. Plant Res.">
        <title>Analysis of a plastid gene cluster reveals a close relationship between Cyanidioschyzon and Cyanidium.</title>
        <authorList>
            <person name="Ohta N."/>
        </authorList>
    </citation>
    <scope>NUCLEOTIDE SEQUENCE [GENOMIC DNA]</scope>
    <source>
        <strain>RK-1</strain>
    </source>
</reference>
<name>CFXQ2_CYACA</name>
<protein>
    <recommendedName>
        <fullName>Protein CfxQ homolog</fullName>
    </recommendedName>
</protein>
<keyword id="KW-0067">ATP-binding</keyword>
<keyword id="KW-0150">Chloroplast</keyword>
<keyword id="KW-0547">Nucleotide-binding</keyword>
<keyword id="KW-0934">Plastid</keyword>
<geneLocation type="chloroplast"/>
<dbReference type="EMBL" id="D63676">
    <property type="protein sequence ID" value="BAA22830.1"/>
    <property type="molecule type" value="Genomic_DNA"/>
</dbReference>
<dbReference type="SMR" id="O22034"/>
<dbReference type="GO" id="GO:0009507">
    <property type="term" value="C:chloroplast"/>
    <property type="evidence" value="ECO:0007669"/>
    <property type="project" value="UniProtKB-SubCell"/>
</dbReference>
<dbReference type="GO" id="GO:0005524">
    <property type="term" value="F:ATP binding"/>
    <property type="evidence" value="ECO:0007669"/>
    <property type="project" value="UniProtKB-KW"/>
</dbReference>
<dbReference type="GO" id="GO:0016887">
    <property type="term" value="F:ATP hydrolysis activity"/>
    <property type="evidence" value="ECO:0007669"/>
    <property type="project" value="InterPro"/>
</dbReference>
<dbReference type="CDD" id="cd00009">
    <property type="entry name" value="AAA"/>
    <property type="match status" value="1"/>
</dbReference>
<dbReference type="FunFam" id="3.40.50.300:FF:000216">
    <property type="entry name" value="Type VII secretion ATPase EccA"/>
    <property type="match status" value="1"/>
</dbReference>
<dbReference type="Gene3D" id="1.10.8.60">
    <property type="match status" value="1"/>
</dbReference>
<dbReference type="Gene3D" id="3.40.50.300">
    <property type="entry name" value="P-loop containing nucleotide triphosphate hydrolases"/>
    <property type="match status" value="1"/>
</dbReference>
<dbReference type="InterPro" id="IPR003593">
    <property type="entry name" value="AAA+_ATPase"/>
</dbReference>
<dbReference type="InterPro" id="IPR041627">
    <property type="entry name" value="AAA_lid_6"/>
</dbReference>
<dbReference type="InterPro" id="IPR003959">
    <property type="entry name" value="ATPase_AAA_core"/>
</dbReference>
<dbReference type="InterPro" id="IPR000470">
    <property type="entry name" value="CbxX/CfqX_mono"/>
</dbReference>
<dbReference type="InterPro" id="IPR000641">
    <property type="entry name" value="CbxX/CfxQ"/>
</dbReference>
<dbReference type="InterPro" id="IPR050773">
    <property type="entry name" value="CbxX/CfxQ_RuBisCO_ESX"/>
</dbReference>
<dbReference type="InterPro" id="IPR027417">
    <property type="entry name" value="P-loop_NTPase"/>
</dbReference>
<dbReference type="NCBIfam" id="TIGR02880">
    <property type="entry name" value="cbbX_cfxQ"/>
    <property type="match status" value="1"/>
</dbReference>
<dbReference type="PANTHER" id="PTHR43392">
    <property type="entry name" value="AAA-TYPE ATPASE FAMILY PROTEIN / ANKYRIN REPEAT FAMILY PROTEIN"/>
    <property type="match status" value="1"/>
</dbReference>
<dbReference type="PANTHER" id="PTHR43392:SF2">
    <property type="entry name" value="AAA-TYPE ATPASE FAMILY PROTEIN _ ANKYRIN REPEAT FAMILY PROTEIN"/>
    <property type="match status" value="1"/>
</dbReference>
<dbReference type="Pfam" id="PF00004">
    <property type="entry name" value="AAA"/>
    <property type="match status" value="1"/>
</dbReference>
<dbReference type="Pfam" id="PF17866">
    <property type="entry name" value="AAA_lid_6"/>
    <property type="match status" value="1"/>
</dbReference>
<dbReference type="PRINTS" id="PR00819">
    <property type="entry name" value="CBXCFQXSUPER"/>
</dbReference>
<dbReference type="PRINTS" id="PR00820">
    <property type="entry name" value="CBXXCFQX"/>
</dbReference>
<dbReference type="SMART" id="SM00382">
    <property type="entry name" value="AAA"/>
    <property type="match status" value="1"/>
</dbReference>
<dbReference type="SUPFAM" id="SSF52540">
    <property type="entry name" value="P-loop containing nucleoside triphosphate hydrolases"/>
    <property type="match status" value="1"/>
</dbReference>
<evidence type="ECO:0000250" key="1"/>
<evidence type="ECO:0000255" key="2"/>
<evidence type="ECO:0000305" key="3"/>